<comment type="function">
    <text evidence="1 2">Involved in male fertility. Required for manchette development and acrosome biogenesis during spermiogenesis (By similarity). Binds in vitro to phospholipids, including phosphatidylinositol 3-phosphate (PtdIns(3)P), phosphatidylinositol 4,5-bisphosphate (PtdIns(4,5)P2), phosphatidylinositol 4-phosphate (PtdIns(4)P) and phosphatidic acid (PA). Contrary to other profilin family members, does not bind to actin in vitro (By similarity).</text>
</comment>
<comment type="subcellular location">
    <subcellularLocation>
        <location evidence="4">Cytoplasm</location>
    </subcellularLocation>
    <text evidence="3 4">In round spermatids, mainly observed in the acroplaxome. During the progression of spermiogenesis, relocalizes to the developing manchette of spermatids step 8 (S8). Coinciding with the initiation of manchette disassembly in spermatids S14, seen in the cytoplasm subjacent to the disassembling manchette.</text>
</comment>
<comment type="tissue specificity">
    <text evidence="3 4">Expressed in testis, in seminiferous tubules (at protein level) (PubMed:15591451, PubMed:19419568). Expressed in spermatocytes and spermatids, but not in spermatogonium (PubMed:15591451).</text>
</comment>
<comment type="developmental stage">
    <text evidence="3 4">Expression in seminiferous tubules overlaps with the onset of meiosis, starting from spermatocytes of the late pachytene stages and proceeding throughout meiosis to the round spermatids. Detected in nearly all stages of spermiogenesis (at protein level).</text>
</comment>
<comment type="similarity">
    <text evidence="5">Belongs to the profilin family.</text>
</comment>
<gene>
    <name type="primary">Pfn4</name>
</gene>
<organism>
    <name type="scientific">Rattus norvegicus</name>
    <name type="common">Rat</name>
    <dbReference type="NCBI Taxonomy" id="10116"/>
    <lineage>
        <taxon>Eukaryota</taxon>
        <taxon>Metazoa</taxon>
        <taxon>Chordata</taxon>
        <taxon>Craniata</taxon>
        <taxon>Vertebrata</taxon>
        <taxon>Euteleostomi</taxon>
        <taxon>Mammalia</taxon>
        <taxon>Eutheria</taxon>
        <taxon>Euarchontoglires</taxon>
        <taxon>Glires</taxon>
        <taxon>Rodentia</taxon>
        <taxon>Myomorpha</taxon>
        <taxon>Muroidea</taxon>
        <taxon>Muridae</taxon>
        <taxon>Murinae</taxon>
        <taxon>Rattus</taxon>
    </lineage>
</organism>
<proteinExistence type="evidence at protein level"/>
<keyword id="KW-0963">Cytoplasm</keyword>
<keyword id="KW-0217">Developmental protein</keyword>
<keyword id="KW-0221">Differentiation</keyword>
<keyword id="KW-0446">Lipid-binding</keyword>
<keyword id="KW-1185">Reference proteome</keyword>
<keyword id="KW-0744">Spermatogenesis</keyword>
<reference key="1">
    <citation type="journal article" date="2005" name="Mol. Hum. Reprod.">
        <title>Novel testis-expressed profilin IV associated with acrosome biogenesis and spermatid elongation.</title>
        <authorList>
            <person name="Obermann H."/>
            <person name="Raabe I."/>
            <person name="Balvers M."/>
            <person name="Brunswig B."/>
            <person name="Schulze W."/>
            <person name="Kirchhoff C."/>
        </authorList>
    </citation>
    <scope>NUCLEOTIDE SEQUENCE [MRNA]</scope>
    <scope>SUBCELLULAR LOCATION</scope>
    <scope>TISSUE SPECIFICITY</scope>
    <scope>DEVELOPMENTAL STAGE</scope>
    <source>
        <strain>Wistar</strain>
        <tissue>Testis</tissue>
    </source>
</reference>
<reference key="2">
    <citation type="journal article" date="2004" name="Nature">
        <title>Genome sequence of the Brown Norway rat yields insights into mammalian evolution.</title>
        <authorList>
            <person name="Gibbs R.A."/>
            <person name="Weinstock G.M."/>
            <person name="Metzker M.L."/>
            <person name="Muzny D.M."/>
            <person name="Sodergren E.J."/>
            <person name="Scherer S."/>
            <person name="Scott G."/>
            <person name="Steffen D."/>
            <person name="Worley K.C."/>
            <person name="Burch P.E."/>
            <person name="Okwuonu G."/>
            <person name="Hines S."/>
            <person name="Lewis L."/>
            <person name="Deramo C."/>
            <person name="Delgado O."/>
            <person name="Dugan-Rocha S."/>
            <person name="Miner G."/>
            <person name="Morgan M."/>
            <person name="Hawes A."/>
            <person name="Gill R."/>
            <person name="Holt R.A."/>
            <person name="Adams M.D."/>
            <person name="Amanatides P.G."/>
            <person name="Baden-Tillson H."/>
            <person name="Barnstead M."/>
            <person name="Chin S."/>
            <person name="Evans C.A."/>
            <person name="Ferriera S."/>
            <person name="Fosler C."/>
            <person name="Glodek A."/>
            <person name="Gu Z."/>
            <person name="Jennings D."/>
            <person name="Kraft C.L."/>
            <person name="Nguyen T."/>
            <person name="Pfannkoch C.M."/>
            <person name="Sitter C."/>
            <person name="Sutton G.G."/>
            <person name="Venter J.C."/>
            <person name="Woodage T."/>
            <person name="Smith D."/>
            <person name="Lee H.-M."/>
            <person name="Gustafson E."/>
            <person name="Cahill P."/>
            <person name="Kana A."/>
            <person name="Doucette-Stamm L."/>
            <person name="Weinstock K."/>
            <person name="Fechtel K."/>
            <person name="Weiss R.B."/>
            <person name="Dunn D.M."/>
            <person name="Green E.D."/>
            <person name="Blakesley R.W."/>
            <person name="Bouffard G.G."/>
            <person name="De Jong P.J."/>
            <person name="Osoegawa K."/>
            <person name="Zhu B."/>
            <person name="Marra M."/>
            <person name="Schein J."/>
            <person name="Bosdet I."/>
            <person name="Fjell C."/>
            <person name="Jones S."/>
            <person name="Krzywinski M."/>
            <person name="Mathewson C."/>
            <person name="Siddiqui A."/>
            <person name="Wye N."/>
            <person name="McPherson J."/>
            <person name="Zhao S."/>
            <person name="Fraser C.M."/>
            <person name="Shetty J."/>
            <person name="Shatsman S."/>
            <person name="Geer K."/>
            <person name="Chen Y."/>
            <person name="Abramzon S."/>
            <person name="Nierman W.C."/>
            <person name="Havlak P.H."/>
            <person name="Chen R."/>
            <person name="Durbin K.J."/>
            <person name="Egan A."/>
            <person name="Ren Y."/>
            <person name="Song X.-Z."/>
            <person name="Li B."/>
            <person name="Liu Y."/>
            <person name="Qin X."/>
            <person name="Cawley S."/>
            <person name="Cooney A.J."/>
            <person name="D'Souza L.M."/>
            <person name="Martin K."/>
            <person name="Wu J.Q."/>
            <person name="Gonzalez-Garay M.L."/>
            <person name="Jackson A.R."/>
            <person name="Kalafus K.J."/>
            <person name="McLeod M.P."/>
            <person name="Milosavljevic A."/>
            <person name="Virk D."/>
            <person name="Volkov A."/>
            <person name="Wheeler D.A."/>
            <person name="Zhang Z."/>
            <person name="Bailey J.A."/>
            <person name="Eichler E.E."/>
            <person name="Tuzun E."/>
            <person name="Birney E."/>
            <person name="Mongin E."/>
            <person name="Ureta-Vidal A."/>
            <person name="Woodwark C."/>
            <person name="Zdobnov E."/>
            <person name="Bork P."/>
            <person name="Suyama M."/>
            <person name="Torrents D."/>
            <person name="Alexandersson M."/>
            <person name="Trask B.J."/>
            <person name="Young J.M."/>
            <person name="Huang H."/>
            <person name="Wang H."/>
            <person name="Xing H."/>
            <person name="Daniels S."/>
            <person name="Gietzen D."/>
            <person name="Schmidt J."/>
            <person name="Stevens K."/>
            <person name="Vitt U."/>
            <person name="Wingrove J."/>
            <person name="Camara F."/>
            <person name="Mar Alba M."/>
            <person name="Abril J.F."/>
            <person name="Guigo R."/>
            <person name="Smit A."/>
            <person name="Dubchak I."/>
            <person name="Rubin E.M."/>
            <person name="Couronne O."/>
            <person name="Poliakov A."/>
            <person name="Huebner N."/>
            <person name="Ganten D."/>
            <person name="Goesele C."/>
            <person name="Hummel O."/>
            <person name="Kreitler T."/>
            <person name="Lee Y.-A."/>
            <person name="Monti J."/>
            <person name="Schulz H."/>
            <person name="Zimdahl H."/>
            <person name="Himmelbauer H."/>
            <person name="Lehrach H."/>
            <person name="Jacob H.J."/>
            <person name="Bromberg S."/>
            <person name="Gullings-Handley J."/>
            <person name="Jensen-Seaman M.I."/>
            <person name="Kwitek A.E."/>
            <person name="Lazar J."/>
            <person name="Pasko D."/>
            <person name="Tonellato P.J."/>
            <person name="Twigger S."/>
            <person name="Ponting C.P."/>
            <person name="Duarte J.M."/>
            <person name="Rice S."/>
            <person name="Goodstadt L."/>
            <person name="Beatson S.A."/>
            <person name="Emes R.D."/>
            <person name="Winter E.E."/>
            <person name="Webber C."/>
            <person name="Brandt P."/>
            <person name="Nyakatura G."/>
            <person name="Adetobi M."/>
            <person name="Chiaromonte F."/>
            <person name="Elnitski L."/>
            <person name="Eswara P."/>
            <person name="Hardison R.C."/>
            <person name="Hou M."/>
            <person name="Kolbe D."/>
            <person name="Makova K."/>
            <person name="Miller W."/>
            <person name="Nekrutenko A."/>
            <person name="Riemer C."/>
            <person name="Schwartz S."/>
            <person name="Taylor J."/>
            <person name="Yang S."/>
            <person name="Zhang Y."/>
            <person name="Lindpaintner K."/>
            <person name="Andrews T.D."/>
            <person name="Caccamo M."/>
            <person name="Clamp M."/>
            <person name="Clarke L."/>
            <person name="Curwen V."/>
            <person name="Durbin R.M."/>
            <person name="Eyras E."/>
            <person name="Searle S.M."/>
            <person name="Cooper G.M."/>
            <person name="Batzoglou S."/>
            <person name="Brudno M."/>
            <person name="Sidow A."/>
            <person name="Stone E.A."/>
            <person name="Payseur B.A."/>
            <person name="Bourque G."/>
            <person name="Lopez-Otin C."/>
            <person name="Puente X.S."/>
            <person name="Chakrabarti K."/>
            <person name="Chatterji S."/>
            <person name="Dewey C."/>
            <person name="Pachter L."/>
            <person name="Bray N."/>
            <person name="Yap V.B."/>
            <person name="Caspi A."/>
            <person name="Tesler G."/>
            <person name="Pevzner P.A."/>
            <person name="Haussler D."/>
            <person name="Roskin K.M."/>
            <person name="Baertsch R."/>
            <person name="Clawson H."/>
            <person name="Furey T.S."/>
            <person name="Hinrichs A.S."/>
            <person name="Karolchik D."/>
            <person name="Kent W.J."/>
            <person name="Rosenbloom K.R."/>
            <person name="Trumbower H."/>
            <person name="Weirauch M."/>
            <person name="Cooper D.N."/>
            <person name="Stenson P.D."/>
            <person name="Ma B."/>
            <person name="Brent M."/>
            <person name="Arumugam M."/>
            <person name="Shteynberg D."/>
            <person name="Copley R.R."/>
            <person name="Taylor M.S."/>
            <person name="Riethman H."/>
            <person name="Mudunuri U."/>
            <person name="Peterson J."/>
            <person name="Guyer M."/>
            <person name="Felsenfeld A."/>
            <person name="Old S."/>
            <person name="Mockrin S."/>
            <person name="Collins F.S."/>
        </authorList>
    </citation>
    <scope>NUCLEOTIDE SEQUENCE [LARGE SCALE GENOMIC DNA]</scope>
    <source>
        <strain>Brown Norway</strain>
    </source>
</reference>
<reference key="3">
    <citation type="submission" date="2005-07" db="EMBL/GenBank/DDBJ databases">
        <authorList>
            <person name="Mural R.J."/>
            <person name="Adams M.D."/>
            <person name="Myers E.W."/>
            <person name="Smith H.O."/>
            <person name="Venter J.C."/>
        </authorList>
    </citation>
    <scope>NUCLEOTIDE SEQUENCE [LARGE SCALE GENOMIC DNA]</scope>
</reference>
<reference key="4">
    <citation type="journal article" date="2004" name="Genome Res.">
        <title>The status, quality, and expansion of the NIH full-length cDNA project: the Mammalian Gene Collection (MGC).</title>
        <authorList>
            <consortium name="The MGC Project Team"/>
        </authorList>
    </citation>
    <scope>NUCLEOTIDE SEQUENCE [LARGE SCALE MRNA]</scope>
    <source>
        <tissue>Testis</tissue>
    </source>
</reference>
<reference key="5">
    <citation type="journal article" date="2009" name="BMC Cell Biol.">
        <title>Testis-expressed profilins 3 and 4 show distinct functional characteristics and localize in the acroplaxome-manchette complex in spermatids.</title>
        <authorList>
            <person name="Behnen M."/>
            <person name="Murk K."/>
            <person name="Kursula P."/>
            <person name="Cappallo-Obermann H."/>
            <person name="Rothkegel M."/>
            <person name="Kierszenbaum A.L."/>
            <person name="Kirchhoff C."/>
        </authorList>
    </citation>
    <scope>SUBCELLULAR LOCATION</scope>
    <scope>TISSUE SPECIFICITY</scope>
    <scope>DEVELOPMENTAL STAGE</scope>
</reference>
<evidence type="ECO:0000250" key="1">
    <source>
        <dbReference type="UniProtKB" id="Q8NHR9"/>
    </source>
</evidence>
<evidence type="ECO:0000250" key="2">
    <source>
        <dbReference type="UniProtKB" id="Q9D6I3"/>
    </source>
</evidence>
<evidence type="ECO:0000269" key="3">
    <source>
    </source>
</evidence>
<evidence type="ECO:0000269" key="4">
    <source>
    </source>
</evidence>
<evidence type="ECO:0000305" key="5"/>
<protein>
    <recommendedName>
        <fullName>Profilin-4</fullName>
    </recommendedName>
    <alternativeName>
        <fullName>Profilin IV</fullName>
    </alternativeName>
</protein>
<accession>Q5IRJ7</accession>
<name>PROF4_RAT</name>
<dbReference type="EMBL" id="AY682392">
    <property type="protein sequence ID" value="AAV85168.1"/>
    <property type="molecule type" value="mRNA"/>
</dbReference>
<dbReference type="EMBL" id="AABR06042656">
    <property type="status" value="NOT_ANNOTATED_CDS"/>
    <property type="molecule type" value="Genomic_DNA"/>
</dbReference>
<dbReference type="EMBL" id="CH473947">
    <property type="protein sequence ID" value="EDM03047.1"/>
    <property type="molecule type" value="Genomic_DNA"/>
</dbReference>
<dbReference type="EMBL" id="BC107465">
    <property type="protein sequence ID" value="AAI07466.1"/>
    <property type="molecule type" value="mRNA"/>
</dbReference>
<dbReference type="RefSeq" id="NP_001009503.1">
    <property type="nucleotide sequence ID" value="NM_001009503.2"/>
</dbReference>
<dbReference type="RefSeq" id="XP_038968599.1">
    <property type="nucleotide sequence ID" value="XM_039112671.1"/>
</dbReference>
<dbReference type="RefSeq" id="XP_038968600.1">
    <property type="nucleotide sequence ID" value="XM_039112672.1"/>
</dbReference>
<dbReference type="SMR" id="Q5IRJ7"/>
<dbReference type="FunCoup" id="Q5IRJ7">
    <property type="interactions" value="520"/>
</dbReference>
<dbReference type="STRING" id="10116.ENSRNOP00000064666"/>
<dbReference type="PhosphoSitePlus" id="Q5IRJ7"/>
<dbReference type="PaxDb" id="10116-ENSRNOP00000064666"/>
<dbReference type="Ensembl" id="ENSRNOT00000074570.2">
    <property type="protein sequence ID" value="ENSRNOP00000064666.1"/>
    <property type="gene ID" value="ENSRNOG00000050386.2"/>
</dbReference>
<dbReference type="GeneID" id="494222"/>
<dbReference type="KEGG" id="rno:494222"/>
<dbReference type="AGR" id="RGD:1359707"/>
<dbReference type="CTD" id="375189"/>
<dbReference type="RGD" id="1359707">
    <property type="gene designation" value="Pfn4"/>
</dbReference>
<dbReference type="eggNOG" id="KOG1755">
    <property type="taxonomic scope" value="Eukaryota"/>
</dbReference>
<dbReference type="GeneTree" id="ENSGT00390000017067"/>
<dbReference type="HOGENOM" id="CLU_120772_2_0_1"/>
<dbReference type="InParanoid" id="Q5IRJ7"/>
<dbReference type="OMA" id="QGQKFML"/>
<dbReference type="OrthoDB" id="421374at2759"/>
<dbReference type="PhylomeDB" id="Q5IRJ7"/>
<dbReference type="PRO" id="PR:Q5IRJ7"/>
<dbReference type="Proteomes" id="UP000002494">
    <property type="component" value="Chromosome 6"/>
</dbReference>
<dbReference type="Proteomes" id="UP000234681">
    <property type="component" value="Chromosome 6"/>
</dbReference>
<dbReference type="Bgee" id="ENSRNOG00000050386">
    <property type="expression patterns" value="Expressed in testis"/>
</dbReference>
<dbReference type="GO" id="GO:0005938">
    <property type="term" value="C:cell cortex"/>
    <property type="evidence" value="ECO:0000318"/>
    <property type="project" value="GO_Central"/>
</dbReference>
<dbReference type="GO" id="GO:0003785">
    <property type="term" value="F:actin monomer binding"/>
    <property type="evidence" value="ECO:0000318"/>
    <property type="project" value="GO_Central"/>
</dbReference>
<dbReference type="GO" id="GO:0008289">
    <property type="term" value="F:lipid binding"/>
    <property type="evidence" value="ECO:0007669"/>
    <property type="project" value="UniProtKB-KW"/>
</dbReference>
<dbReference type="GO" id="GO:0001675">
    <property type="term" value="P:acrosome assembly"/>
    <property type="evidence" value="ECO:0000250"/>
    <property type="project" value="UniProtKB"/>
</dbReference>
<dbReference type="GO" id="GO:0030317">
    <property type="term" value="P:flagellated sperm motility"/>
    <property type="evidence" value="ECO:0000250"/>
    <property type="project" value="UniProtKB"/>
</dbReference>
<dbReference type="GO" id="GO:1905198">
    <property type="term" value="P:manchette assembly"/>
    <property type="evidence" value="ECO:0000250"/>
    <property type="project" value="UniProtKB"/>
</dbReference>
<dbReference type="GO" id="GO:0120316">
    <property type="term" value="P:sperm flagellum assembly"/>
    <property type="evidence" value="ECO:0000250"/>
    <property type="project" value="UniProtKB"/>
</dbReference>
<dbReference type="GO" id="GO:0007283">
    <property type="term" value="P:spermatogenesis"/>
    <property type="evidence" value="ECO:0000250"/>
    <property type="project" value="UniProtKB"/>
</dbReference>
<dbReference type="CDD" id="cd00148">
    <property type="entry name" value="PROF"/>
    <property type="match status" value="1"/>
</dbReference>
<dbReference type="FunFam" id="3.30.450.30:FF:000007">
    <property type="entry name" value="Profilin"/>
    <property type="match status" value="1"/>
</dbReference>
<dbReference type="Gene3D" id="3.30.450.30">
    <property type="entry name" value="Dynein light chain 2a, cytoplasmic"/>
    <property type="match status" value="1"/>
</dbReference>
<dbReference type="InterPro" id="IPR048278">
    <property type="entry name" value="PFN"/>
</dbReference>
<dbReference type="InterPro" id="IPR005455">
    <property type="entry name" value="PFN_euk"/>
</dbReference>
<dbReference type="InterPro" id="IPR036140">
    <property type="entry name" value="PFN_sf"/>
</dbReference>
<dbReference type="PANTHER" id="PTHR11604">
    <property type="entry name" value="PROFILIN"/>
    <property type="match status" value="1"/>
</dbReference>
<dbReference type="PANTHER" id="PTHR11604:SF2">
    <property type="entry name" value="PROFILIN-4"/>
    <property type="match status" value="1"/>
</dbReference>
<dbReference type="Pfam" id="PF00235">
    <property type="entry name" value="Profilin"/>
    <property type="match status" value="1"/>
</dbReference>
<dbReference type="SMART" id="SM00392">
    <property type="entry name" value="PROF"/>
    <property type="match status" value="1"/>
</dbReference>
<dbReference type="SUPFAM" id="SSF55770">
    <property type="entry name" value="Profilin (actin-binding protein)"/>
    <property type="match status" value="1"/>
</dbReference>
<feature type="chain" id="PRO_0000423634" description="Profilin-4">
    <location>
        <begin position="1"/>
        <end position="129"/>
    </location>
</feature>
<sequence>MSHLQNLLLDTLLGTKHVDGAALIKLQEKTLCVTSPGFSVMPCDVRTLLNGFAKNPLLTRREGLYFREKDYKCVRADDCSLYAKKENTGVVVVKTHMYLLVATYTAGMYPSVCVEATEKLGEYLRKKGN</sequence>